<evidence type="ECO:0000255" key="1"/>
<evidence type="ECO:0000256" key="2">
    <source>
        <dbReference type="SAM" id="MobiDB-lite"/>
    </source>
</evidence>
<evidence type="ECO:0000305" key="3"/>
<dbReference type="EMBL" id="AL123456">
    <property type="protein sequence ID" value="CCP44606.1"/>
    <property type="molecule type" value="Genomic_DNA"/>
</dbReference>
<dbReference type="PIR" id="H70663">
    <property type="entry name" value="H70663"/>
</dbReference>
<dbReference type="RefSeq" id="WP_003904712.1">
    <property type="nucleotide sequence ID" value="NZ_KK339370.1"/>
</dbReference>
<dbReference type="RefSeq" id="YP_177847.1">
    <property type="nucleotide sequence ID" value="NC_000962.3"/>
</dbReference>
<dbReference type="STRING" id="83332.Rv1840c"/>
<dbReference type="PaxDb" id="83332-Rv1840c"/>
<dbReference type="DNASU" id="885753"/>
<dbReference type="GeneID" id="885753"/>
<dbReference type="KEGG" id="mtu:Rv1840c"/>
<dbReference type="KEGG" id="mtv:RVBD_1840c"/>
<dbReference type="PATRIC" id="fig|83332.111.peg.2046"/>
<dbReference type="TubercuList" id="Rv1840c"/>
<dbReference type="eggNOG" id="COG0657">
    <property type="taxonomic scope" value="Bacteria"/>
</dbReference>
<dbReference type="InParanoid" id="P9WIF3"/>
<dbReference type="Proteomes" id="UP000001584">
    <property type="component" value="Chromosome"/>
</dbReference>
<dbReference type="GO" id="GO:0005886">
    <property type="term" value="C:plasma membrane"/>
    <property type="evidence" value="ECO:0007669"/>
    <property type="project" value="UniProtKB-SubCell"/>
</dbReference>
<dbReference type="FunFam" id="1.10.287.850:FF:000001">
    <property type="entry name" value="PE_PGRS39"/>
    <property type="match status" value="1"/>
</dbReference>
<dbReference type="Gene3D" id="1.10.287.850">
    <property type="entry name" value="HP0062-like domain"/>
    <property type="match status" value="1"/>
</dbReference>
<dbReference type="InterPro" id="IPR000084">
    <property type="entry name" value="PE-PGRS_N"/>
</dbReference>
<dbReference type="InterPro" id="IPR048996">
    <property type="entry name" value="PGRS_rpt"/>
</dbReference>
<dbReference type="Pfam" id="PF00934">
    <property type="entry name" value="PE"/>
    <property type="match status" value="1"/>
</dbReference>
<dbReference type="Pfam" id="PF21526">
    <property type="entry name" value="PGRS"/>
    <property type="match status" value="2"/>
</dbReference>
<dbReference type="PRINTS" id="PR01228">
    <property type="entry name" value="EGGSHELL"/>
</dbReference>
<dbReference type="SUPFAM" id="SSF140459">
    <property type="entry name" value="PE/PPE dimer-like"/>
    <property type="match status" value="1"/>
</dbReference>
<keyword id="KW-1003">Cell membrane</keyword>
<keyword id="KW-0472">Membrane</keyword>
<keyword id="KW-1185">Reference proteome</keyword>
<keyword id="KW-0812">Transmembrane</keyword>
<keyword id="KW-1133">Transmembrane helix</keyword>
<sequence length="515" mass="43916">MSFVVAAPEVVVAAASDLAGIGSAIGAANAAAAVPTMGVLAAGADEVSAAVADLFGAHAQAYQALSAQAALFHEQFVHAMTAGAGAYAGAEAADAAALDVLNGPFQALFGRPLIGDGANGAPGQPGGPGGLLYGNGGNGGNGGIGQPGGAGGDAGLIGNGGNGGIGGPGATGLAGGAGGVGGLLFGDGGNGGAGGLGTGPVGATGGIGGPGGAAVGLFGHGGAGGAGGLGKAGFAGGAGGTGGTGGLLYGNGGNGGNVPSGAADGGAGGDARLIGNGGDGGSVGAAPTGIGNGGNGGNGGWLYGDGGSGGSTLQGFSDGGTGGNAGMFGDGGNGGFSFFDGNGGDGGTGGTLIGNGGDGGNSVQTDGFLRGHGGDGGNAVGLIGNGGAGGAGSAGTGVFAPGGGSGGNGGNGALLVGNGGAGGSGGPTQIPSVAVPVTGAGGTGGNGGTAGLIGNGGNGGAAGVSGDGTPGTGGNGGYAQLIGDGGDGGPGDSGGPGGSGGTGGTLAGQNGSPGG</sequence>
<feature type="chain" id="PRO_0000216165" description="Uncharacterized PE-PGRS family protein PE_PGRS34">
    <location>
        <begin position="1"/>
        <end position="515"/>
    </location>
</feature>
<feature type="transmembrane region" description="Helical" evidence="1">
    <location>
        <begin position="1"/>
        <end position="21"/>
    </location>
</feature>
<feature type="transmembrane region" description="Helical" evidence="1">
    <location>
        <begin position="165"/>
        <end position="185"/>
    </location>
</feature>
<feature type="transmembrane region" description="Helical" evidence="1">
    <location>
        <begin position="199"/>
        <end position="219"/>
    </location>
</feature>
<feature type="domain" description="PE" evidence="1">
    <location>
        <begin position="1"/>
        <end position="93"/>
    </location>
</feature>
<feature type="region of interest" description="Disordered" evidence="2">
    <location>
        <begin position="349"/>
        <end position="368"/>
    </location>
</feature>
<feature type="region of interest" description="Disordered" evidence="2">
    <location>
        <begin position="463"/>
        <end position="515"/>
    </location>
</feature>
<feature type="compositionally biased region" description="Gly residues" evidence="2">
    <location>
        <begin position="349"/>
        <end position="360"/>
    </location>
</feature>
<accession>P9WIF3</accession>
<accession>L0T9E6</accession>
<accession>Q50594</accession>
<proteinExistence type="inferred from homology"/>
<organism>
    <name type="scientific">Mycobacterium tuberculosis (strain ATCC 25618 / H37Rv)</name>
    <dbReference type="NCBI Taxonomy" id="83332"/>
    <lineage>
        <taxon>Bacteria</taxon>
        <taxon>Bacillati</taxon>
        <taxon>Actinomycetota</taxon>
        <taxon>Actinomycetes</taxon>
        <taxon>Mycobacteriales</taxon>
        <taxon>Mycobacteriaceae</taxon>
        <taxon>Mycobacterium</taxon>
        <taxon>Mycobacterium tuberculosis complex</taxon>
    </lineage>
</organism>
<protein>
    <recommendedName>
        <fullName>Uncharacterized PE-PGRS family protein PE_PGRS34</fullName>
    </recommendedName>
</protein>
<name>PG34_MYCTU</name>
<reference key="1">
    <citation type="journal article" date="1998" name="Nature">
        <title>Deciphering the biology of Mycobacterium tuberculosis from the complete genome sequence.</title>
        <authorList>
            <person name="Cole S.T."/>
            <person name="Brosch R."/>
            <person name="Parkhill J."/>
            <person name="Garnier T."/>
            <person name="Churcher C.M."/>
            <person name="Harris D.E."/>
            <person name="Gordon S.V."/>
            <person name="Eiglmeier K."/>
            <person name="Gas S."/>
            <person name="Barry C.E. III"/>
            <person name="Tekaia F."/>
            <person name="Badcock K."/>
            <person name="Basham D."/>
            <person name="Brown D."/>
            <person name="Chillingworth T."/>
            <person name="Connor R."/>
            <person name="Davies R.M."/>
            <person name="Devlin K."/>
            <person name="Feltwell T."/>
            <person name="Gentles S."/>
            <person name="Hamlin N."/>
            <person name="Holroyd S."/>
            <person name="Hornsby T."/>
            <person name="Jagels K."/>
            <person name="Krogh A."/>
            <person name="McLean J."/>
            <person name="Moule S."/>
            <person name="Murphy L.D."/>
            <person name="Oliver S."/>
            <person name="Osborne J."/>
            <person name="Quail M.A."/>
            <person name="Rajandream M.A."/>
            <person name="Rogers J."/>
            <person name="Rutter S."/>
            <person name="Seeger K."/>
            <person name="Skelton S."/>
            <person name="Squares S."/>
            <person name="Squares R."/>
            <person name="Sulston J.E."/>
            <person name="Taylor K."/>
            <person name="Whitehead S."/>
            <person name="Barrell B.G."/>
        </authorList>
    </citation>
    <scope>NUCLEOTIDE SEQUENCE [LARGE SCALE GENOMIC DNA]</scope>
    <source>
        <strain>ATCC 25618 / H37Rv</strain>
    </source>
</reference>
<gene>
    <name type="primary">PE_PGRS34</name>
    <name type="ordered locus">Rv1840c</name>
    <name type="ORF">MTCY1A11.04</name>
    <name type="ORF">MTCY359.33</name>
</gene>
<comment type="subcellular location">
    <subcellularLocation>
        <location evidence="3">Cell membrane</location>
        <topology evidence="3">Multi-pass membrane protein</topology>
    </subcellularLocation>
</comment>
<comment type="similarity">
    <text evidence="3">Belongs to the mycobacterial PE family. PGRS subfamily.</text>
</comment>